<protein>
    <recommendedName>
        <fullName evidence="1">Small ribosomal subunit protein eS6</fullName>
    </recommendedName>
    <alternativeName>
        <fullName evidence="2">30S ribosomal protein S6e</fullName>
    </alternativeName>
</protein>
<comment type="similarity">
    <text evidence="1">Belongs to the eukaryotic ribosomal protein eS6 family.</text>
</comment>
<feature type="chain" id="PRO_1000081589" description="Small ribosomal subunit protein eS6">
    <location>
        <begin position="1"/>
        <end position="150"/>
    </location>
</feature>
<proteinExistence type="inferred from homology"/>
<evidence type="ECO:0000255" key="1">
    <source>
        <dbReference type="HAMAP-Rule" id="MF_00512"/>
    </source>
</evidence>
<evidence type="ECO:0000305" key="2"/>
<gene>
    <name evidence="1" type="primary">rps6e</name>
    <name type="ordered locus">Cmaq_0134</name>
</gene>
<name>RS6E_CALMQ</name>
<sequence>MPTFKLVLSDPRSGKSKQLEVKDEVAQRLIGLRIGDVFDAQLIKEIIDLPQGFRIKITGGTGYDGAPMHPGIEGPVKKYALLSGRPGFRPEKKGLRVRRLIRGNTISDQIVQVNAVLVYPENWDKEPVIQVSGEAKPTEAKAEEKAEAAQ</sequence>
<accession>A8MA52</accession>
<keyword id="KW-1185">Reference proteome</keyword>
<keyword id="KW-0687">Ribonucleoprotein</keyword>
<keyword id="KW-0689">Ribosomal protein</keyword>
<organism>
    <name type="scientific">Caldivirga maquilingensis (strain ATCC 700844 / DSM 13496 / JCM 10307 / IC-167)</name>
    <dbReference type="NCBI Taxonomy" id="397948"/>
    <lineage>
        <taxon>Archaea</taxon>
        <taxon>Thermoproteota</taxon>
        <taxon>Thermoprotei</taxon>
        <taxon>Thermoproteales</taxon>
        <taxon>Thermoproteaceae</taxon>
        <taxon>Caldivirga</taxon>
    </lineage>
</organism>
<dbReference type="EMBL" id="CP000852">
    <property type="protein sequence ID" value="ABW00984.1"/>
    <property type="molecule type" value="Genomic_DNA"/>
</dbReference>
<dbReference type="RefSeq" id="WP_012185204.1">
    <property type="nucleotide sequence ID" value="NC_009954.1"/>
</dbReference>
<dbReference type="SMR" id="A8MA52"/>
<dbReference type="STRING" id="397948.Cmaq_0134"/>
<dbReference type="GeneID" id="5709224"/>
<dbReference type="KEGG" id="cma:Cmaq_0134"/>
<dbReference type="eggNOG" id="arCOG01946">
    <property type="taxonomic scope" value="Archaea"/>
</dbReference>
<dbReference type="HOGENOM" id="CLU_109671_1_0_2"/>
<dbReference type="OrthoDB" id="7793at2157"/>
<dbReference type="Proteomes" id="UP000001137">
    <property type="component" value="Chromosome"/>
</dbReference>
<dbReference type="GO" id="GO:1990904">
    <property type="term" value="C:ribonucleoprotein complex"/>
    <property type="evidence" value="ECO:0007669"/>
    <property type="project" value="UniProtKB-KW"/>
</dbReference>
<dbReference type="GO" id="GO:0005840">
    <property type="term" value="C:ribosome"/>
    <property type="evidence" value="ECO:0007669"/>
    <property type="project" value="UniProtKB-KW"/>
</dbReference>
<dbReference type="GO" id="GO:0003735">
    <property type="term" value="F:structural constituent of ribosome"/>
    <property type="evidence" value="ECO:0007669"/>
    <property type="project" value="InterPro"/>
</dbReference>
<dbReference type="GO" id="GO:0006412">
    <property type="term" value="P:translation"/>
    <property type="evidence" value="ECO:0007669"/>
    <property type="project" value="UniProtKB-UniRule"/>
</dbReference>
<dbReference type="HAMAP" id="MF_00512">
    <property type="entry name" value="Ribosomal_eS6"/>
    <property type="match status" value="1"/>
</dbReference>
<dbReference type="InterPro" id="IPR001377">
    <property type="entry name" value="Ribosomal_eS6"/>
</dbReference>
<dbReference type="InterPro" id="IPR020924">
    <property type="entry name" value="Ribosomal_eS6_arc"/>
</dbReference>
<dbReference type="InterPro" id="IPR018282">
    <property type="entry name" value="Ribosomal_eS6_CS"/>
</dbReference>
<dbReference type="NCBIfam" id="NF003293">
    <property type="entry name" value="PRK04290.1-2"/>
    <property type="match status" value="1"/>
</dbReference>
<dbReference type="PANTHER" id="PTHR11502">
    <property type="entry name" value="40S RIBOSOMAL PROTEIN S6"/>
    <property type="match status" value="1"/>
</dbReference>
<dbReference type="Pfam" id="PF01092">
    <property type="entry name" value="Ribosomal_S6e"/>
    <property type="match status" value="1"/>
</dbReference>
<dbReference type="SMART" id="SM01405">
    <property type="entry name" value="Ribosomal_S6e"/>
    <property type="match status" value="1"/>
</dbReference>
<dbReference type="PROSITE" id="PS00578">
    <property type="entry name" value="RIBOSOMAL_S6E"/>
    <property type="match status" value="1"/>
</dbReference>
<reference key="1">
    <citation type="submission" date="2007-10" db="EMBL/GenBank/DDBJ databases">
        <title>Complete sequence of Caldivirga maquilingensis IC-167.</title>
        <authorList>
            <consortium name="US DOE Joint Genome Institute"/>
            <person name="Copeland A."/>
            <person name="Lucas S."/>
            <person name="Lapidus A."/>
            <person name="Barry K."/>
            <person name="Glavina del Rio T."/>
            <person name="Dalin E."/>
            <person name="Tice H."/>
            <person name="Pitluck S."/>
            <person name="Saunders E."/>
            <person name="Brettin T."/>
            <person name="Bruce D."/>
            <person name="Detter J.C."/>
            <person name="Han C."/>
            <person name="Schmutz J."/>
            <person name="Larimer F."/>
            <person name="Land M."/>
            <person name="Hauser L."/>
            <person name="Kyrpides N."/>
            <person name="Ivanova N."/>
            <person name="Biddle J.F."/>
            <person name="Zhang Z."/>
            <person name="Fitz-Gibbon S.T."/>
            <person name="Lowe T.M."/>
            <person name="Saltikov C."/>
            <person name="House C.H."/>
            <person name="Richardson P."/>
        </authorList>
    </citation>
    <scope>NUCLEOTIDE SEQUENCE [LARGE SCALE GENOMIC DNA]</scope>
    <source>
        <strain>ATCC 700844 / DSM 13496 / JCM 10307 / IC-167</strain>
    </source>
</reference>